<protein>
    <recommendedName>
        <fullName evidence="1">ATP-dependent protease subunit HslV</fullName>
        <ecNumber evidence="1">3.4.25.2</ecNumber>
    </recommendedName>
</protein>
<dbReference type="EC" id="3.4.25.2" evidence="1"/>
<dbReference type="EMBL" id="AM747720">
    <property type="protein sequence ID" value="CAR50811.1"/>
    <property type="molecule type" value="Genomic_DNA"/>
</dbReference>
<dbReference type="RefSeq" id="WP_006483683.1">
    <property type="nucleotide sequence ID" value="NC_011000.1"/>
</dbReference>
<dbReference type="SMR" id="B4E7Z2"/>
<dbReference type="MEROPS" id="T01.006"/>
<dbReference type="GeneID" id="56559683"/>
<dbReference type="KEGG" id="bcj:BCAL0501"/>
<dbReference type="eggNOG" id="COG5405">
    <property type="taxonomic scope" value="Bacteria"/>
</dbReference>
<dbReference type="HOGENOM" id="CLU_093872_1_0_4"/>
<dbReference type="BioCyc" id="BCEN216591:G1G1V-571-MONOMER"/>
<dbReference type="Proteomes" id="UP000001035">
    <property type="component" value="Chromosome 1"/>
</dbReference>
<dbReference type="GO" id="GO:0009376">
    <property type="term" value="C:HslUV protease complex"/>
    <property type="evidence" value="ECO:0007669"/>
    <property type="project" value="UniProtKB-UniRule"/>
</dbReference>
<dbReference type="GO" id="GO:0005839">
    <property type="term" value="C:proteasome core complex"/>
    <property type="evidence" value="ECO:0007669"/>
    <property type="project" value="InterPro"/>
</dbReference>
<dbReference type="GO" id="GO:0046872">
    <property type="term" value="F:metal ion binding"/>
    <property type="evidence" value="ECO:0007669"/>
    <property type="project" value="UniProtKB-KW"/>
</dbReference>
<dbReference type="GO" id="GO:0004298">
    <property type="term" value="F:threonine-type endopeptidase activity"/>
    <property type="evidence" value="ECO:0007669"/>
    <property type="project" value="UniProtKB-KW"/>
</dbReference>
<dbReference type="GO" id="GO:0051603">
    <property type="term" value="P:proteolysis involved in protein catabolic process"/>
    <property type="evidence" value="ECO:0007669"/>
    <property type="project" value="InterPro"/>
</dbReference>
<dbReference type="CDD" id="cd01913">
    <property type="entry name" value="protease_HslV"/>
    <property type="match status" value="1"/>
</dbReference>
<dbReference type="FunFam" id="3.60.20.10:FF:000002">
    <property type="entry name" value="ATP-dependent protease subunit HslV"/>
    <property type="match status" value="1"/>
</dbReference>
<dbReference type="Gene3D" id="3.60.20.10">
    <property type="entry name" value="Glutamine Phosphoribosylpyrophosphate, subunit 1, domain 1"/>
    <property type="match status" value="1"/>
</dbReference>
<dbReference type="HAMAP" id="MF_00248">
    <property type="entry name" value="HslV"/>
    <property type="match status" value="1"/>
</dbReference>
<dbReference type="InterPro" id="IPR022281">
    <property type="entry name" value="ATP-dep_Prtase_HsIV_su"/>
</dbReference>
<dbReference type="InterPro" id="IPR029055">
    <property type="entry name" value="Ntn_hydrolases_N"/>
</dbReference>
<dbReference type="InterPro" id="IPR001353">
    <property type="entry name" value="Proteasome_sua/b"/>
</dbReference>
<dbReference type="InterPro" id="IPR023333">
    <property type="entry name" value="Proteasome_suB-type"/>
</dbReference>
<dbReference type="NCBIfam" id="TIGR03692">
    <property type="entry name" value="ATP_dep_HslV"/>
    <property type="match status" value="1"/>
</dbReference>
<dbReference type="NCBIfam" id="NF003964">
    <property type="entry name" value="PRK05456.1"/>
    <property type="match status" value="1"/>
</dbReference>
<dbReference type="PANTHER" id="PTHR32194:SF0">
    <property type="entry name" value="ATP-DEPENDENT PROTEASE SUBUNIT HSLV"/>
    <property type="match status" value="1"/>
</dbReference>
<dbReference type="PANTHER" id="PTHR32194">
    <property type="entry name" value="METALLOPROTEASE TLDD"/>
    <property type="match status" value="1"/>
</dbReference>
<dbReference type="Pfam" id="PF00227">
    <property type="entry name" value="Proteasome"/>
    <property type="match status" value="1"/>
</dbReference>
<dbReference type="PIRSF" id="PIRSF039093">
    <property type="entry name" value="HslV"/>
    <property type="match status" value="1"/>
</dbReference>
<dbReference type="SUPFAM" id="SSF56235">
    <property type="entry name" value="N-terminal nucleophile aminohydrolases (Ntn hydrolases)"/>
    <property type="match status" value="1"/>
</dbReference>
<dbReference type="PROSITE" id="PS51476">
    <property type="entry name" value="PROTEASOME_BETA_2"/>
    <property type="match status" value="1"/>
</dbReference>
<name>HSLV_BURCJ</name>
<comment type="function">
    <text evidence="1">Protease subunit of a proteasome-like degradation complex believed to be a general protein degrading machinery.</text>
</comment>
<comment type="catalytic activity">
    <reaction evidence="1">
        <text>ATP-dependent cleavage of peptide bonds with broad specificity.</text>
        <dbReference type="EC" id="3.4.25.2"/>
    </reaction>
</comment>
<comment type="activity regulation">
    <text evidence="1">Allosterically activated by HslU binding.</text>
</comment>
<comment type="subunit">
    <text evidence="1">A double ring-shaped homohexamer of HslV is capped on each side by a ring-shaped HslU homohexamer. The assembly of the HslU/HslV complex is dependent on binding of ATP.</text>
</comment>
<comment type="subcellular location">
    <subcellularLocation>
        <location evidence="1">Cytoplasm</location>
    </subcellularLocation>
</comment>
<comment type="similarity">
    <text evidence="1">Belongs to the peptidase T1B family. HslV subfamily.</text>
</comment>
<gene>
    <name evidence="1" type="primary">hslV</name>
    <name type="ordered locus">BceJ2315_04980</name>
    <name type="ORF">BCAL0501</name>
</gene>
<feature type="chain" id="PRO_1000100878" description="ATP-dependent protease subunit HslV">
    <location>
        <begin position="1"/>
        <end position="178"/>
    </location>
</feature>
<feature type="active site" evidence="1">
    <location>
        <position position="7"/>
    </location>
</feature>
<feature type="binding site" evidence="1">
    <location>
        <position position="162"/>
    </location>
    <ligand>
        <name>Na(+)</name>
        <dbReference type="ChEBI" id="CHEBI:29101"/>
    </ligand>
</feature>
<feature type="binding site" evidence="1">
    <location>
        <position position="165"/>
    </location>
    <ligand>
        <name>Na(+)</name>
        <dbReference type="ChEBI" id="CHEBI:29101"/>
    </ligand>
</feature>
<feature type="binding site" evidence="1">
    <location>
        <position position="168"/>
    </location>
    <ligand>
        <name>Na(+)</name>
        <dbReference type="ChEBI" id="CHEBI:29101"/>
    </ligand>
</feature>
<proteinExistence type="inferred from homology"/>
<organism>
    <name type="scientific">Burkholderia cenocepacia (strain ATCC BAA-245 / DSM 16553 / LMG 16656 / NCTC 13227 / J2315 / CF5610)</name>
    <name type="common">Burkholderia cepacia (strain J2315)</name>
    <dbReference type="NCBI Taxonomy" id="216591"/>
    <lineage>
        <taxon>Bacteria</taxon>
        <taxon>Pseudomonadati</taxon>
        <taxon>Pseudomonadota</taxon>
        <taxon>Betaproteobacteria</taxon>
        <taxon>Burkholderiales</taxon>
        <taxon>Burkholderiaceae</taxon>
        <taxon>Burkholderia</taxon>
        <taxon>Burkholderia cepacia complex</taxon>
    </lineage>
</organism>
<sequence length="178" mass="19115">MEQFHGTTIVSVRRGDKVALGGDGQVTLGNIVMKGGARKVRRIYNNQVLVGFAGGTADAFSLLDRFEAKLEKHQGNLTRAAVELAKDWRTDRMLRRLEAMLITADATTTLVITGNGDVLDPEGGICAIGSGGAYAQAAARALVENTDLSPREIVEKSLGIAGDMCIYTNHNRIIETIE</sequence>
<accession>B4E7Z2</accession>
<keyword id="KW-0021">Allosteric enzyme</keyword>
<keyword id="KW-0963">Cytoplasm</keyword>
<keyword id="KW-0378">Hydrolase</keyword>
<keyword id="KW-0479">Metal-binding</keyword>
<keyword id="KW-0645">Protease</keyword>
<keyword id="KW-0915">Sodium</keyword>
<keyword id="KW-0888">Threonine protease</keyword>
<reference key="1">
    <citation type="journal article" date="2009" name="J. Bacteriol.">
        <title>The genome of Burkholderia cenocepacia J2315, an epidemic pathogen of cystic fibrosis patients.</title>
        <authorList>
            <person name="Holden M.T."/>
            <person name="Seth-Smith H.M."/>
            <person name="Crossman L.C."/>
            <person name="Sebaihia M."/>
            <person name="Bentley S.D."/>
            <person name="Cerdeno-Tarraga A.M."/>
            <person name="Thomson N.R."/>
            <person name="Bason N."/>
            <person name="Quail M.A."/>
            <person name="Sharp S."/>
            <person name="Cherevach I."/>
            <person name="Churcher C."/>
            <person name="Goodhead I."/>
            <person name="Hauser H."/>
            <person name="Holroyd N."/>
            <person name="Mungall K."/>
            <person name="Scott P."/>
            <person name="Walker D."/>
            <person name="White B."/>
            <person name="Rose H."/>
            <person name="Iversen P."/>
            <person name="Mil-Homens D."/>
            <person name="Rocha E.P."/>
            <person name="Fialho A.M."/>
            <person name="Baldwin A."/>
            <person name="Dowson C."/>
            <person name="Barrell B.G."/>
            <person name="Govan J.R."/>
            <person name="Vandamme P."/>
            <person name="Hart C.A."/>
            <person name="Mahenthiralingam E."/>
            <person name="Parkhill J."/>
        </authorList>
    </citation>
    <scope>NUCLEOTIDE SEQUENCE [LARGE SCALE GENOMIC DNA]</scope>
    <source>
        <strain>ATCC BAA-245 / DSM 16553 / LMG 16656 / NCTC 13227 / J2315 / CF5610</strain>
    </source>
</reference>
<evidence type="ECO:0000255" key="1">
    <source>
        <dbReference type="HAMAP-Rule" id="MF_00248"/>
    </source>
</evidence>